<reference key="1">
    <citation type="journal article" date="1987" name="Nucleic Acids Res.">
        <title>A growth-related mRNA in cultured mouse cells encodes a placental calcium binding protein.</title>
        <authorList>
            <person name="Jackson-Grusby L.L."/>
            <person name="Swiergiel J."/>
            <person name="Linzer D.I.H."/>
        </authorList>
    </citation>
    <scope>NUCLEOTIDE SEQUENCE [MRNA]</scope>
    <source>
        <strain>BALB/cJ</strain>
    </source>
</reference>
<reference key="2">
    <citation type="journal article" date="1988" name="J. Biochem.">
        <title>Cloning of the sequences expressed abundantly in established cell lines: identification of a cDNA clone highly homologous to S-100, a calcium binding protein.</title>
        <authorList>
            <person name="Goto K."/>
            <person name="Endo H."/>
            <person name="Fujiyoshi T."/>
        </authorList>
    </citation>
    <scope>NUCLEOTIDE SEQUENCE [MRNA]</scope>
    <source>
        <strain>BALB/cJ</strain>
    </source>
</reference>
<reference key="3">
    <citation type="journal article" date="1989" name="Genes Dev.">
        <title>Isolation and characterization of a gene specifically expressed in different metastatic cells and whose deduced gene product has a high degree of homology to a Ca2+-binding protein family.</title>
        <authorList>
            <person name="Ebralidze A."/>
            <person name="Tulchinsky E."/>
            <person name="Grigorian M."/>
            <person name="Afanasyeva A."/>
            <person name="Senin V."/>
            <person name="Revazova E."/>
            <person name="Lukanidin E."/>
        </authorList>
    </citation>
    <scope>NUCLEOTIDE SEQUENCE [MRNA]</scope>
</reference>
<reference key="4">
    <citation type="journal article" date="1990" name="Gene">
        <title>Structure of gene mts1, transcribed in metastatic mouse tumor cells.</title>
        <authorList>
            <person name="Tulchinsky E.M."/>
            <person name="Grigorian M.S."/>
            <person name="Ebralidze A.K."/>
            <person name="Milshina N.I."/>
            <person name="Lukanidin E.M."/>
        </authorList>
    </citation>
    <scope>NUCLEOTIDE SEQUENCE [GENOMIC DNA]</scope>
    <source>
        <tissue>Liver</tissue>
    </source>
</reference>
<reference key="5">
    <citation type="journal article" date="1993" name="Oncogene">
        <title>Characterization of a positive regulatory element in the mts1 gene.</title>
        <authorList>
            <person name="Tulchinsky E."/>
            <person name="Kramerov D."/>
            <person name="Ford H.L."/>
            <person name="Reshetnyak E."/>
            <person name="Lukanidin E."/>
            <person name="Zain S."/>
        </authorList>
    </citation>
    <scope>NUCLEOTIDE SEQUENCE [GENOMIC DNA] OF 1-54</scope>
</reference>
<reference key="6">
    <citation type="journal article" date="1994" name="J. Biol. Chem.">
        <title>Non-muscle myosin heavy chain as a possible target for protein encoded by metastasis-related mts-1 gene.</title>
        <authorList>
            <person name="Kriajevska M.V."/>
            <person name="Cardenas M.N."/>
            <person name="Grigorian M.S."/>
            <person name="Ambartsumian N.S."/>
            <person name="Georgiev G.P."/>
            <person name="Lukanidin E.M."/>
        </authorList>
    </citation>
    <scope>FUNCTION</scope>
    <scope>INTERACTION WITH MYH9</scope>
    <scope>SUBCELLULAR LOCATION</scope>
</reference>
<reference key="7">
    <citation type="submission" date="2008-03" db="UniProtKB">
        <authorList>
            <person name="Sumpton D.P."/>
            <person name="Sandilands E."/>
            <person name="Frame M.C."/>
            <person name="Bienvenut W.V."/>
        </authorList>
    </citation>
    <scope>PROTEIN SEQUENCE OF 2-18 AND 41-48</scope>
    <scope>CLEAVAGE OF INITIATOR METHIONINE</scope>
    <scope>ACETYLATION AT ALA-2</scope>
    <scope>IDENTIFICATION BY MASS SPECTROMETRY</scope>
    <source>
        <tissue>Embryonic fibroblast</tissue>
    </source>
</reference>
<reference key="8">
    <citation type="journal article" date="2010" name="Mol. Biol. Cell">
        <title>S100A4 regulates macrophage chemotaxis.</title>
        <authorList>
            <person name="Li Z.H."/>
            <person name="Dulyaninova N.G."/>
            <person name="House R.P."/>
            <person name="Almo S.C."/>
            <person name="Bresnick A.R."/>
        </authorList>
    </citation>
    <scope>FUNCTION</scope>
    <scope>DISRUPTION PHENOTYPE</scope>
</reference>
<reference key="9">
    <citation type="journal article" date="2010" name="Cancer Res.">
        <title>Lung metastasis fails in MMTV-PyMT oncomice lacking S100A4 due to a T-cell deficiency in primary tumors.</title>
        <authorList>
            <person name="Grum-Schwensen B."/>
            <person name="Klingelhoefer J."/>
            <person name="Grigorian M."/>
            <person name="Almholt K."/>
            <person name="Nielsen B.S."/>
            <person name="Lukanidin E."/>
            <person name="Ambartsumian N."/>
        </authorList>
    </citation>
    <scope>FUNCTION</scope>
    <scope>DISRUPTION PHENOTYPE</scope>
</reference>
<comment type="function">
    <text evidence="1 3 4 5">Calcium-binding protein that plays a role in various cellular processes including motility, angiogenesis, cell differentiation, apoptosis, and autophagy (PubMed:20519440). Increases cell motility and invasiveness by interacting with non-muscle myosin heavy chain (NMMHC) IIA/MYH9 (PubMed:8051043). Mechanistically, promotes filament depolymerization and increases the amount of soluble myosin-IIA, resulting in the formation of stable protrusions facilitating chemotaxis (PubMed:8051043). Also modulates the pro-apoptotic function of TP53 by binding to its C-terminal transactivation domain within the nucleus and reducing its protein levels (By similarity). Within the extracellular space, stimulates cytokine production including granulocyte colony-stimulating factor and CCL24 from T-lymphocytes (PubMed:20103644). In addition, stimulates T-lymphocyte chemotaxis by acting as a chemoattractant complex with PGLYRP1 that promotes lymphocyte migration via CCR5 and CXCR3 receptors (By similarity).</text>
</comment>
<comment type="subunit">
    <text evidence="1">Homodimer. Interacts with PPFIBP1 in a calcium-dependent mode. Interacts with PGLYRP1; this complex acts as a chemoattractant that promotes lymphocyte movement. Interacts with MYH9; this interaction increases cell motility. Interacts with Annexin 2/ANXA2. Interacts with TP53; this interaction promotes TP53 degradation. Interacts with CCR5 and CXCR3. Interacts with FCGR3A; this interaction inhibits PKC-dependent phosphorylation of FCGR3A.</text>
</comment>
<comment type="interaction">
    <interactant intactId="EBI-1544173">
        <id>P07091</id>
    </interactant>
    <interactant intactId="EBI-1544186">
        <id>P56565</id>
        <label>S100a1</label>
    </interactant>
    <organismsDiffer>false</organismsDiffer>
    <experiments>6</experiments>
</comment>
<comment type="interaction">
    <interactant intactId="EBI-1544173">
        <id>P07091</id>
    </interactant>
    <interactant intactId="EBI-1544173">
        <id>P07091</id>
        <label>S100a4</label>
    </interactant>
    <organismsDiffer>false</organismsDiffer>
    <experiments>4</experiments>
</comment>
<comment type="subcellular location">
    <subcellularLocation>
        <location evidence="1">Secreted</location>
    </subcellularLocation>
    <subcellularLocation>
        <location evidence="1">Nucleus</location>
    </subcellularLocation>
    <subcellularLocation>
        <location evidence="5">Cytoplasm</location>
    </subcellularLocation>
</comment>
<comment type="tissue specificity">
    <text>Specifically expressed in different metastatic cells.</text>
</comment>
<comment type="induction">
    <text>The mRNA coding for this protein increases in abundance after serum stimulation of quiescent mouse fibroblasts.</text>
</comment>
<comment type="disruption phenotype">
    <text evidence="3 4">Deletion mice are fertile, grow normally and exhibit no overt abnormalities; however loss of S100A4 results in impaired recruitment of macrophages to sites of inflammation in vivo (PubMed:20519440). Mice also show decreased metastatic burden in lungs of PyMT-induced mammary tumors which is associated with reduced vessel density (PubMed:20103644).</text>
</comment>
<comment type="similarity">
    <text evidence="7">Belongs to the S-100 family.</text>
</comment>
<accession>P07091</accession>
<accession>P20066</accession>
<name>S10A4_MOUSE</name>
<gene>
    <name type="primary">S100a4</name>
    <name type="synonym">Capl</name>
    <name type="synonym">Mts1</name>
</gene>
<sequence>MARPLEEALDVIVSTFHKYSGKEGDKFKLNKTELKELLTRELPSFLGKRTDEAAFQKVMSNLDSNRDNEVDFQEYCVFLSCIAMMCNEFFEGCPDKEPRKK</sequence>
<keyword id="KW-0007">Acetylation</keyword>
<keyword id="KW-0106">Calcium</keyword>
<keyword id="KW-0963">Cytoplasm</keyword>
<keyword id="KW-0903">Direct protein sequencing</keyword>
<keyword id="KW-0479">Metal-binding</keyword>
<keyword id="KW-0539">Nucleus</keyword>
<keyword id="KW-1185">Reference proteome</keyword>
<keyword id="KW-0677">Repeat</keyword>
<keyword id="KW-0964">Secreted</keyword>
<feature type="initiator methionine" description="Removed" evidence="6">
    <location>
        <position position="1"/>
    </location>
</feature>
<feature type="chain" id="PRO_0000143978" description="Protein S100-A4">
    <location>
        <begin position="2"/>
        <end position="101"/>
    </location>
</feature>
<feature type="domain" description="EF-hand 1" evidence="7">
    <location>
        <begin position="12"/>
        <end position="47"/>
    </location>
</feature>
<feature type="domain" description="EF-hand 2" evidence="2">
    <location>
        <begin position="50"/>
        <end position="85"/>
    </location>
</feature>
<feature type="binding site" evidence="7">
    <location>
        <position position="28"/>
    </location>
    <ligand>
        <name>Ca(2+)</name>
        <dbReference type="ChEBI" id="CHEBI:29108"/>
        <label>1</label>
        <note>low affinity</note>
    </ligand>
</feature>
<feature type="binding site" evidence="7">
    <location>
        <position position="33"/>
    </location>
    <ligand>
        <name>Ca(2+)</name>
        <dbReference type="ChEBI" id="CHEBI:29108"/>
        <label>1</label>
        <note>low affinity</note>
    </ligand>
</feature>
<feature type="binding site" evidence="2">
    <location>
        <position position="63"/>
    </location>
    <ligand>
        <name>Ca(2+)</name>
        <dbReference type="ChEBI" id="CHEBI:29108"/>
        <label>2</label>
        <note>high affinity</note>
    </ligand>
</feature>
<feature type="binding site" evidence="2">
    <location>
        <position position="65"/>
    </location>
    <ligand>
        <name>Ca(2+)</name>
        <dbReference type="ChEBI" id="CHEBI:29108"/>
        <label>2</label>
        <note>high affinity</note>
    </ligand>
</feature>
<feature type="binding site" evidence="2">
    <location>
        <position position="67"/>
    </location>
    <ligand>
        <name>Ca(2+)</name>
        <dbReference type="ChEBI" id="CHEBI:29108"/>
        <label>2</label>
        <note>high affinity</note>
    </ligand>
</feature>
<feature type="binding site" evidence="2">
    <location>
        <position position="69"/>
    </location>
    <ligand>
        <name>Ca(2+)</name>
        <dbReference type="ChEBI" id="CHEBI:29108"/>
        <label>2</label>
        <note>high affinity</note>
    </ligand>
</feature>
<feature type="binding site" evidence="2">
    <location>
        <position position="74"/>
    </location>
    <ligand>
        <name>Ca(2+)</name>
        <dbReference type="ChEBI" id="CHEBI:29108"/>
        <label>2</label>
        <note>high affinity</note>
    </ligand>
</feature>
<feature type="modified residue" description="N-acetylalanine" evidence="6">
    <location>
        <position position="2"/>
    </location>
</feature>
<feature type="modified residue" description="N6-acetyllysine" evidence="1">
    <location>
        <position position="35"/>
    </location>
</feature>
<feature type="sequence conflict" description="In Ref. 5; CAA34224." evidence="7" ref="5">
    <original>G</original>
    <variation>GVSGSXFNGQ</variation>
    <location>
        <position position="47"/>
    </location>
</feature>
<proteinExistence type="evidence at protein level"/>
<protein>
    <recommendedName>
        <fullName>Protein S100-A4</fullName>
    </recommendedName>
    <alternativeName>
        <fullName>Metastasin</fullName>
    </alternativeName>
    <alternativeName>
        <fullName>Metastatic cell protein</fullName>
    </alternativeName>
    <alternativeName>
        <fullName>PEL98</fullName>
    </alternativeName>
    <alternativeName>
        <fullName>Placental calcium-binding protein</fullName>
    </alternativeName>
    <alternativeName>
        <fullName>Protein 18A2</fullName>
    </alternativeName>
    <alternativeName>
        <fullName>Protein Mts1</fullName>
    </alternativeName>
    <alternativeName>
        <fullName>S100 calcium-binding protein A4</fullName>
    </alternativeName>
</protein>
<dbReference type="EMBL" id="X05835">
    <property type="protein sequence ID" value="CAA29282.1"/>
    <property type="molecule type" value="mRNA"/>
</dbReference>
<dbReference type="EMBL" id="D00208">
    <property type="protein sequence ID" value="BAA00148.1"/>
    <property type="molecule type" value="mRNA"/>
</dbReference>
<dbReference type="EMBL" id="X16190">
    <property type="protein sequence ID" value="CAA34316.1"/>
    <property type="molecule type" value="mRNA"/>
</dbReference>
<dbReference type="EMBL" id="M36578">
    <property type="protein sequence ID" value="AAA39749.1"/>
    <property type="molecule type" value="Genomic_DNA"/>
</dbReference>
<dbReference type="EMBL" id="M36579">
    <property type="protein sequence ID" value="AAA39750.1"/>
    <property type="molecule type" value="Genomic_DNA"/>
</dbReference>
<dbReference type="EMBL" id="X16094">
    <property type="protein sequence ID" value="CAA34224.1"/>
    <property type="molecule type" value="Genomic_DNA"/>
</dbReference>
<dbReference type="CCDS" id="CCDS17538.1"/>
<dbReference type="PIR" id="S06207">
    <property type="entry name" value="S06207"/>
</dbReference>
<dbReference type="RefSeq" id="NP_001397500.1">
    <property type="nucleotide sequence ID" value="NM_001410571.1"/>
</dbReference>
<dbReference type="RefSeq" id="NP_001397501.1">
    <property type="nucleotide sequence ID" value="NM_001410572.1"/>
</dbReference>
<dbReference type="RefSeq" id="NP_035441.1">
    <property type="nucleotide sequence ID" value="NM_011311.3"/>
</dbReference>
<dbReference type="RefSeq" id="XP_006501240.1">
    <property type="nucleotide sequence ID" value="XM_006501177.3"/>
</dbReference>
<dbReference type="RefSeq" id="XP_006501241.1">
    <property type="nucleotide sequence ID" value="XM_006501178.2"/>
</dbReference>
<dbReference type="BMRB" id="P07091"/>
<dbReference type="SMR" id="P07091"/>
<dbReference type="BioGRID" id="203053">
    <property type="interactions" value="4"/>
</dbReference>
<dbReference type="FunCoup" id="P07091">
    <property type="interactions" value="372"/>
</dbReference>
<dbReference type="IntAct" id="P07091">
    <property type="interactions" value="3"/>
</dbReference>
<dbReference type="STRING" id="10090.ENSMUSP00000001046"/>
<dbReference type="GlyGen" id="P07091">
    <property type="glycosylation" value="1 site, 1 O-linked glycan (1 site)"/>
</dbReference>
<dbReference type="iPTMnet" id="P07091"/>
<dbReference type="PhosphoSitePlus" id="P07091"/>
<dbReference type="SwissPalm" id="P07091"/>
<dbReference type="jPOST" id="P07091"/>
<dbReference type="PaxDb" id="10090-ENSMUSP00000001046"/>
<dbReference type="PeptideAtlas" id="P07091"/>
<dbReference type="ProteomicsDB" id="255433"/>
<dbReference type="Pumba" id="P07091"/>
<dbReference type="ABCD" id="P07091">
    <property type="antibodies" value="3 sequenced antibodies"/>
</dbReference>
<dbReference type="Antibodypedia" id="1551">
    <property type="antibodies" value="969 antibodies from 44 providers"/>
</dbReference>
<dbReference type="DNASU" id="20198"/>
<dbReference type="Ensembl" id="ENSMUST00000001046.7">
    <property type="protein sequence ID" value="ENSMUSP00000001046.6"/>
    <property type="gene ID" value="ENSMUSG00000001020.9"/>
</dbReference>
<dbReference type="GeneID" id="20198"/>
<dbReference type="KEGG" id="mmu:20198"/>
<dbReference type="UCSC" id="uc008qcz.2">
    <property type="organism name" value="mouse"/>
</dbReference>
<dbReference type="AGR" id="MGI:1330282"/>
<dbReference type="CTD" id="6275"/>
<dbReference type="MGI" id="MGI:1330282">
    <property type="gene designation" value="S100a4"/>
</dbReference>
<dbReference type="VEuPathDB" id="HostDB:ENSMUSG00000001020"/>
<dbReference type="eggNOG" id="ENOG502S4AU">
    <property type="taxonomic scope" value="Eukaryota"/>
</dbReference>
<dbReference type="GeneTree" id="ENSGT00940000161276"/>
<dbReference type="InParanoid" id="P07091"/>
<dbReference type="OMA" id="QDLPDKM"/>
<dbReference type="OrthoDB" id="8881129at2759"/>
<dbReference type="TreeFam" id="TF332727"/>
<dbReference type="BioGRID-ORCS" id="20198">
    <property type="hits" value="1 hit in 78 CRISPR screens"/>
</dbReference>
<dbReference type="ChiTaRS" id="S100a4">
    <property type="organism name" value="mouse"/>
</dbReference>
<dbReference type="PRO" id="PR:P07091"/>
<dbReference type="Proteomes" id="UP000000589">
    <property type="component" value="Chromosome 3"/>
</dbReference>
<dbReference type="RNAct" id="P07091">
    <property type="molecule type" value="protein"/>
</dbReference>
<dbReference type="Bgee" id="ENSMUSG00000001020">
    <property type="expression patterns" value="Expressed in lip and 79 other cell types or tissues"/>
</dbReference>
<dbReference type="ExpressionAtlas" id="P07091">
    <property type="expression patterns" value="baseline and differential"/>
</dbReference>
<dbReference type="GO" id="GO:0005829">
    <property type="term" value="C:cytosol"/>
    <property type="evidence" value="ECO:0007669"/>
    <property type="project" value="Ensembl"/>
</dbReference>
<dbReference type="GO" id="GO:0005615">
    <property type="term" value="C:extracellular space"/>
    <property type="evidence" value="ECO:0007669"/>
    <property type="project" value="Ensembl"/>
</dbReference>
<dbReference type="GO" id="GO:0005654">
    <property type="term" value="C:nucleoplasm"/>
    <property type="evidence" value="ECO:0007669"/>
    <property type="project" value="Ensembl"/>
</dbReference>
<dbReference type="GO" id="GO:0048471">
    <property type="term" value="C:perinuclear region of cytoplasm"/>
    <property type="evidence" value="ECO:0007669"/>
    <property type="project" value="Ensembl"/>
</dbReference>
<dbReference type="GO" id="GO:0003779">
    <property type="term" value="F:actin binding"/>
    <property type="evidence" value="ECO:0007669"/>
    <property type="project" value="Ensembl"/>
</dbReference>
<dbReference type="GO" id="GO:0005509">
    <property type="term" value="F:calcium ion binding"/>
    <property type="evidence" value="ECO:0000314"/>
    <property type="project" value="MGI"/>
</dbReference>
<dbReference type="GO" id="GO:0048306">
    <property type="term" value="F:calcium-dependent protein binding"/>
    <property type="evidence" value="ECO:0007669"/>
    <property type="project" value="Ensembl"/>
</dbReference>
<dbReference type="GO" id="GO:0042056">
    <property type="term" value="F:chemoattractant activity"/>
    <property type="evidence" value="ECO:0007669"/>
    <property type="project" value="Ensembl"/>
</dbReference>
<dbReference type="GO" id="GO:0042802">
    <property type="term" value="F:identical protein binding"/>
    <property type="evidence" value="ECO:0000353"/>
    <property type="project" value="IntAct"/>
</dbReference>
<dbReference type="GO" id="GO:0050786">
    <property type="term" value="F:RAGE receptor binding"/>
    <property type="evidence" value="ECO:0007669"/>
    <property type="project" value="Ensembl"/>
</dbReference>
<dbReference type="GO" id="GO:0046914">
    <property type="term" value="F:transition metal ion binding"/>
    <property type="evidence" value="ECO:0007669"/>
    <property type="project" value="InterPro"/>
</dbReference>
<dbReference type="GO" id="GO:0043123">
    <property type="term" value="P:positive regulation of canonical NF-kappaB signal transduction"/>
    <property type="evidence" value="ECO:0007669"/>
    <property type="project" value="Ensembl"/>
</dbReference>
<dbReference type="CDD" id="cd00213">
    <property type="entry name" value="S-100"/>
    <property type="match status" value="1"/>
</dbReference>
<dbReference type="FunFam" id="1.10.238.10:FF:000044">
    <property type="entry name" value="Protein S100"/>
    <property type="match status" value="1"/>
</dbReference>
<dbReference type="Gene3D" id="1.10.238.10">
    <property type="entry name" value="EF-hand"/>
    <property type="match status" value="1"/>
</dbReference>
<dbReference type="InterPro" id="IPR011992">
    <property type="entry name" value="EF-hand-dom_pair"/>
</dbReference>
<dbReference type="InterPro" id="IPR018247">
    <property type="entry name" value="EF_Hand_1_Ca_BS"/>
</dbReference>
<dbReference type="InterPro" id="IPR002048">
    <property type="entry name" value="EF_hand_dom"/>
</dbReference>
<dbReference type="InterPro" id="IPR034325">
    <property type="entry name" value="S-100_dom"/>
</dbReference>
<dbReference type="InterPro" id="IPR001751">
    <property type="entry name" value="S100/CaBP7/8-like_CS"/>
</dbReference>
<dbReference type="InterPro" id="IPR013787">
    <property type="entry name" value="S100_Ca-bd_sub"/>
</dbReference>
<dbReference type="PANTHER" id="PTHR11639:SF51">
    <property type="entry name" value="PROTEIN S100-A4"/>
    <property type="match status" value="1"/>
</dbReference>
<dbReference type="PANTHER" id="PTHR11639">
    <property type="entry name" value="S100 CALCIUM-BINDING PROTEIN"/>
    <property type="match status" value="1"/>
</dbReference>
<dbReference type="Pfam" id="PF01023">
    <property type="entry name" value="S_100"/>
    <property type="match status" value="1"/>
</dbReference>
<dbReference type="SMART" id="SM00054">
    <property type="entry name" value="EFh"/>
    <property type="match status" value="1"/>
</dbReference>
<dbReference type="SMART" id="SM01394">
    <property type="entry name" value="S_100"/>
    <property type="match status" value="1"/>
</dbReference>
<dbReference type="SUPFAM" id="SSF47473">
    <property type="entry name" value="EF-hand"/>
    <property type="match status" value="1"/>
</dbReference>
<dbReference type="PROSITE" id="PS00018">
    <property type="entry name" value="EF_HAND_1"/>
    <property type="match status" value="1"/>
</dbReference>
<dbReference type="PROSITE" id="PS50222">
    <property type="entry name" value="EF_HAND_2"/>
    <property type="match status" value="1"/>
</dbReference>
<dbReference type="PROSITE" id="PS00303">
    <property type="entry name" value="S100_CABP"/>
    <property type="match status" value="1"/>
</dbReference>
<organism>
    <name type="scientific">Mus musculus</name>
    <name type="common">Mouse</name>
    <dbReference type="NCBI Taxonomy" id="10090"/>
    <lineage>
        <taxon>Eukaryota</taxon>
        <taxon>Metazoa</taxon>
        <taxon>Chordata</taxon>
        <taxon>Craniata</taxon>
        <taxon>Vertebrata</taxon>
        <taxon>Euteleostomi</taxon>
        <taxon>Mammalia</taxon>
        <taxon>Eutheria</taxon>
        <taxon>Euarchontoglires</taxon>
        <taxon>Glires</taxon>
        <taxon>Rodentia</taxon>
        <taxon>Myomorpha</taxon>
        <taxon>Muroidea</taxon>
        <taxon>Muridae</taxon>
        <taxon>Murinae</taxon>
        <taxon>Mus</taxon>
        <taxon>Mus</taxon>
    </lineage>
</organism>
<evidence type="ECO:0000250" key="1">
    <source>
        <dbReference type="UniProtKB" id="P26447"/>
    </source>
</evidence>
<evidence type="ECO:0000255" key="2">
    <source>
        <dbReference type="PROSITE-ProRule" id="PRU00448"/>
    </source>
</evidence>
<evidence type="ECO:0000269" key="3">
    <source>
    </source>
</evidence>
<evidence type="ECO:0000269" key="4">
    <source>
    </source>
</evidence>
<evidence type="ECO:0000269" key="5">
    <source>
    </source>
</evidence>
<evidence type="ECO:0000269" key="6">
    <source ref="7"/>
</evidence>
<evidence type="ECO:0000305" key="7"/>